<name>RT17_DICDI</name>
<dbReference type="EMBL" id="AAFI02000019">
    <property type="protein sequence ID" value="EAL68783.1"/>
    <property type="molecule type" value="Genomic_DNA"/>
</dbReference>
<dbReference type="RefSeq" id="XP_642722.1">
    <property type="nucleotide sequence ID" value="XM_637630.1"/>
</dbReference>
<dbReference type="SMR" id="Q86K64"/>
<dbReference type="FunCoup" id="Q86K64">
    <property type="interactions" value="181"/>
</dbReference>
<dbReference type="STRING" id="44689.Q86K64"/>
<dbReference type="PaxDb" id="44689-DDB0267024"/>
<dbReference type="EnsemblProtists" id="EAL68783">
    <property type="protein sequence ID" value="EAL68783"/>
    <property type="gene ID" value="DDB_G0277195"/>
</dbReference>
<dbReference type="GeneID" id="8620915"/>
<dbReference type="KEGG" id="ddi:DDB_G0277195"/>
<dbReference type="dictyBase" id="DDB_G0277195">
    <property type="gene designation" value="mrps17"/>
</dbReference>
<dbReference type="VEuPathDB" id="AmoebaDB:DDB_G0277195"/>
<dbReference type="eggNOG" id="ENOG502RHHY">
    <property type="taxonomic scope" value="Eukaryota"/>
</dbReference>
<dbReference type="HOGENOM" id="CLU_1974665_0_0_1"/>
<dbReference type="InParanoid" id="Q86K64"/>
<dbReference type="OMA" id="KYMIHDP"/>
<dbReference type="PhylomeDB" id="Q86K64"/>
<dbReference type="PRO" id="PR:Q86K64"/>
<dbReference type="Proteomes" id="UP000002195">
    <property type="component" value="Chromosome 2"/>
</dbReference>
<dbReference type="GO" id="GO:0005739">
    <property type="term" value="C:mitochondrion"/>
    <property type="evidence" value="ECO:0000318"/>
    <property type="project" value="GO_Central"/>
</dbReference>
<dbReference type="GO" id="GO:1990904">
    <property type="term" value="C:ribonucleoprotein complex"/>
    <property type="evidence" value="ECO:0007669"/>
    <property type="project" value="UniProtKB-KW"/>
</dbReference>
<dbReference type="GO" id="GO:0005840">
    <property type="term" value="C:ribosome"/>
    <property type="evidence" value="ECO:0007669"/>
    <property type="project" value="UniProtKB-KW"/>
</dbReference>
<dbReference type="GO" id="GO:0019843">
    <property type="term" value="F:rRNA binding"/>
    <property type="evidence" value="ECO:0007669"/>
    <property type="project" value="UniProtKB-KW"/>
</dbReference>
<dbReference type="GO" id="GO:0003735">
    <property type="term" value="F:structural constituent of ribosome"/>
    <property type="evidence" value="ECO:0000318"/>
    <property type="project" value="GO_Central"/>
</dbReference>
<dbReference type="GO" id="GO:0006412">
    <property type="term" value="P:translation"/>
    <property type="evidence" value="ECO:0007669"/>
    <property type="project" value="InterPro"/>
</dbReference>
<dbReference type="CDD" id="cd00364">
    <property type="entry name" value="Ribosomal_uS17"/>
    <property type="match status" value="1"/>
</dbReference>
<dbReference type="FunFam" id="2.40.50.140:FF:000794">
    <property type="match status" value="1"/>
</dbReference>
<dbReference type="Gene3D" id="2.40.50.140">
    <property type="entry name" value="Nucleic acid-binding proteins"/>
    <property type="match status" value="1"/>
</dbReference>
<dbReference type="InterPro" id="IPR012340">
    <property type="entry name" value="NA-bd_OB-fold"/>
</dbReference>
<dbReference type="InterPro" id="IPR000266">
    <property type="entry name" value="Ribosomal_uS17"/>
</dbReference>
<dbReference type="PANTHER" id="PTHR10744">
    <property type="entry name" value="40S RIBOSOMAL PROTEIN S11 FAMILY MEMBER"/>
    <property type="match status" value="1"/>
</dbReference>
<dbReference type="PANTHER" id="PTHR10744:SF1">
    <property type="entry name" value="SMALL RIBOSOMAL SUBUNIT PROTEIN US17M"/>
    <property type="match status" value="1"/>
</dbReference>
<dbReference type="Pfam" id="PF00366">
    <property type="entry name" value="Ribosomal_S17"/>
    <property type="match status" value="1"/>
</dbReference>
<dbReference type="SUPFAM" id="SSF50249">
    <property type="entry name" value="Nucleic acid-binding proteins"/>
    <property type="match status" value="1"/>
</dbReference>
<reference key="1">
    <citation type="journal article" date="2002" name="Nature">
        <title>Sequence and analysis of chromosome 2 of Dictyostelium discoideum.</title>
        <authorList>
            <person name="Gloeckner G."/>
            <person name="Eichinger L."/>
            <person name="Szafranski K."/>
            <person name="Pachebat J.A."/>
            <person name="Bankier A.T."/>
            <person name="Dear P.H."/>
            <person name="Lehmann R."/>
            <person name="Baumgart C."/>
            <person name="Parra G."/>
            <person name="Abril J.F."/>
            <person name="Guigo R."/>
            <person name="Kumpf K."/>
            <person name="Tunggal B."/>
            <person name="Cox E.C."/>
            <person name="Quail M.A."/>
            <person name="Platzer M."/>
            <person name="Rosenthal A."/>
            <person name="Noegel A.A."/>
        </authorList>
    </citation>
    <scope>NUCLEOTIDE SEQUENCE [LARGE SCALE GENOMIC DNA]</scope>
    <source>
        <strain>AX4</strain>
    </source>
</reference>
<reference key="2">
    <citation type="journal article" date="2005" name="Nature">
        <title>The genome of the social amoeba Dictyostelium discoideum.</title>
        <authorList>
            <person name="Eichinger L."/>
            <person name="Pachebat J.A."/>
            <person name="Gloeckner G."/>
            <person name="Rajandream M.A."/>
            <person name="Sucgang R."/>
            <person name="Berriman M."/>
            <person name="Song J."/>
            <person name="Olsen R."/>
            <person name="Szafranski K."/>
            <person name="Xu Q."/>
            <person name="Tunggal B."/>
            <person name="Kummerfeld S."/>
            <person name="Madera M."/>
            <person name="Konfortov B.A."/>
            <person name="Rivero F."/>
            <person name="Bankier A.T."/>
            <person name="Lehmann R."/>
            <person name="Hamlin N."/>
            <person name="Davies R."/>
            <person name="Gaudet P."/>
            <person name="Fey P."/>
            <person name="Pilcher K."/>
            <person name="Chen G."/>
            <person name="Saunders D."/>
            <person name="Sodergren E.J."/>
            <person name="Davis P."/>
            <person name="Kerhornou A."/>
            <person name="Nie X."/>
            <person name="Hall N."/>
            <person name="Anjard C."/>
            <person name="Hemphill L."/>
            <person name="Bason N."/>
            <person name="Farbrother P."/>
            <person name="Desany B."/>
            <person name="Just E."/>
            <person name="Morio T."/>
            <person name="Rost R."/>
            <person name="Churcher C.M."/>
            <person name="Cooper J."/>
            <person name="Haydock S."/>
            <person name="van Driessche N."/>
            <person name="Cronin A."/>
            <person name="Goodhead I."/>
            <person name="Muzny D.M."/>
            <person name="Mourier T."/>
            <person name="Pain A."/>
            <person name="Lu M."/>
            <person name="Harper D."/>
            <person name="Lindsay R."/>
            <person name="Hauser H."/>
            <person name="James K.D."/>
            <person name="Quiles M."/>
            <person name="Madan Babu M."/>
            <person name="Saito T."/>
            <person name="Buchrieser C."/>
            <person name="Wardroper A."/>
            <person name="Felder M."/>
            <person name="Thangavelu M."/>
            <person name="Johnson D."/>
            <person name="Knights A."/>
            <person name="Loulseged H."/>
            <person name="Mungall K.L."/>
            <person name="Oliver K."/>
            <person name="Price C."/>
            <person name="Quail M.A."/>
            <person name="Urushihara H."/>
            <person name="Hernandez J."/>
            <person name="Rabbinowitsch E."/>
            <person name="Steffen D."/>
            <person name="Sanders M."/>
            <person name="Ma J."/>
            <person name="Kohara Y."/>
            <person name="Sharp S."/>
            <person name="Simmonds M.N."/>
            <person name="Spiegler S."/>
            <person name="Tivey A."/>
            <person name="Sugano S."/>
            <person name="White B."/>
            <person name="Walker D."/>
            <person name="Woodward J.R."/>
            <person name="Winckler T."/>
            <person name="Tanaka Y."/>
            <person name="Shaulsky G."/>
            <person name="Schleicher M."/>
            <person name="Weinstock G.M."/>
            <person name="Rosenthal A."/>
            <person name="Cox E.C."/>
            <person name="Chisholm R.L."/>
            <person name="Gibbs R.A."/>
            <person name="Loomis W.F."/>
            <person name="Platzer M."/>
            <person name="Kay R.R."/>
            <person name="Williams J.G."/>
            <person name="Dear P.H."/>
            <person name="Noegel A.A."/>
            <person name="Barrell B.G."/>
            <person name="Kuspa A."/>
        </authorList>
    </citation>
    <scope>NUCLEOTIDE SEQUENCE [LARGE SCALE GENOMIC DNA]</scope>
    <source>
        <strain>AX4</strain>
    </source>
</reference>
<evidence type="ECO:0000250" key="1"/>
<evidence type="ECO:0000255" key="2"/>
<evidence type="ECO:0000305" key="3"/>
<protein>
    <recommendedName>
        <fullName evidence="3">Small ribosomal subunit protein uS17m</fullName>
    </recommendedName>
    <alternativeName>
        <fullName evidence="3">28S ribosomal protein S17, mitochondrial</fullName>
        <shortName>MRP-S17</shortName>
        <shortName>S17mt</shortName>
    </alternativeName>
</protein>
<gene>
    <name type="primary">mrps17</name>
    <name type="ORF">DDB_G0277195</name>
</gene>
<keyword id="KW-0496">Mitochondrion</keyword>
<keyword id="KW-1185">Reference proteome</keyword>
<keyword id="KW-0687">Ribonucleoprotein</keyword>
<keyword id="KW-0689">Ribosomal protein</keyword>
<keyword id="KW-0694">RNA-binding</keyword>
<keyword id="KW-0699">rRNA-binding</keyword>
<keyword id="KW-0809">Transit peptide</keyword>
<proteinExistence type="inferred from homology"/>
<feature type="transit peptide" description="Mitochondrion" evidence="2">
    <location>
        <begin position="1"/>
        <end status="unknown"/>
    </location>
</feature>
<feature type="chain" id="PRO_0000330860" description="Small ribosomal subunit protein uS17m">
    <location>
        <begin status="unknown"/>
        <end position="127"/>
    </location>
</feature>
<comment type="subcellular location">
    <subcellularLocation>
        <location evidence="1">Mitochondrion</location>
    </subcellularLocation>
</comment>
<comment type="similarity">
    <text evidence="3">Belongs to the universal ribosomal protein uS17 family.</text>
</comment>
<accession>Q86K64</accession>
<accession>Q54ZZ4</accession>
<sequence>MISKIFEIVHKHQKFISGVCISKTHTKTAMCQVKRLYFDKGKYSALNYKTTKYMIHDPNDICAVGDQVHFRECAPVSKRKAHVVEKIVKKNPITEFLRQNPQYIVTPKEIAERKENDKIKYKHITDL</sequence>
<organism>
    <name type="scientific">Dictyostelium discoideum</name>
    <name type="common">Social amoeba</name>
    <dbReference type="NCBI Taxonomy" id="44689"/>
    <lineage>
        <taxon>Eukaryota</taxon>
        <taxon>Amoebozoa</taxon>
        <taxon>Evosea</taxon>
        <taxon>Eumycetozoa</taxon>
        <taxon>Dictyostelia</taxon>
        <taxon>Dictyosteliales</taxon>
        <taxon>Dictyosteliaceae</taxon>
        <taxon>Dictyostelium</taxon>
    </lineage>
</organism>